<sequence>MLVIPAVDMKNKKCVQLIQGNPDKKHVELDNPPEIAKKWVSEGAEMLHLVDLDGALDGKRVNDEFIEEIIKTSGVPVQIGGGIRSIEDAVYLVEKGAKKVIIGTIAVEKPEIIKELSENIGSEKIMVSLDAKDGKVVIKGWKEKTKYTPVEIGKILEEMGAGSILFTNVDSEGLLNGINIEPTKELVENLKIPIVASGGVTTIDDLLKFKEIGVYGVVVGSAIYKNMINLKDAIEAVK</sequence>
<organism>
    <name type="scientific">Methanococcus maripaludis (strain C5 / ATCC BAA-1333)</name>
    <dbReference type="NCBI Taxonomy" id="402880"/>
    <lineage>
        <taxon>Archaea</taxon>
        <taxon>Methanobacteriati</taxon>
        <taxon>Methanobacteriota</taxon>
        <taxon>Methanomada group</taxon>
        <taxon>Methanococci</taxon>
        <taxon>Methanococcales</taxon>
        <taxon>Methanococcaceae</taxon>
        <taxon>Methanococcus</taxon>
    </lineage>
</organism>
<reference key="1">
    <citation type="submission" date="2007-03" db="EMBL/GenBank/DDBJ databases">
        <title>Complete sequence of chromosome of Methanococcus maripaludis C5.</title>
        <authorList>
            <consortium name="US DOE Joint Genome Institute"/>
            <person name="Copeland A."/>
            <person name="Lucas S."/>
            <person name="Lapidus A."/>
            <person name="Barry K."/>
            <person name="Glavina del Rio T."/>
            <person name="Dalin E."/>
            <person name="Tice H."/>
            <person name="Pitluck S."/>
            <person name="Chertkov O."/>
            <person name="Brettin T."/>
            <person name="Bruce D."/>
            <person name="Han C."/>
            <person name="Detter J.C."/>
            <person name="Schmutz J."/>
            <person name="Larimer F."/>
            <person name="Land M."/>
            <person name="Hauser L."/>
            <person name="Kyrpides N."/>
            <person name="Mikhailova N."/>
            <person name="Sieprawska-Lupa M."/>
            <person name="Whitman W.B."/>
            <person name="Richardson P."/>
        </authorList>
    </citation>
    <scope>NUCLEOTIDE SEQUENCE [LARGE SCALE GENOMIC DNA]</scope>
    <source>
        <strain>C5 / ATCC BAA-1333</strain>
    </source>
</reference>
<keyword id="KW-0028">Amino-acid biosynthesis</keyword>
<keyword id="KW-0963">Cytoplasm</keyword>
<keyword id="KW-0368">Histidine biosynthesis</keyword>
<keyword id="KW-0413">Isomerase</keyword>
<proteinExistence type="inferred from homology"/>
<name>HIS4_METM5</name>
<accession>A4FZ85</accession>
<dbReference type="EC" id="5.3.1.16" evidence="1"/>
<dbReference type="EMBL" id="CP000609">
    <property type="protein sequence ID" value="ABO35519.1"/>
    <property type="molecule type" value="Genomic_DNA"/>
</dbReference>
<dbReference type="RefSeq" id="WP_011868972.1">
    <property type="nucleotide sequence ID" value="NC_009135.1"/>
</dbReference>
<dbReference type="SMR" id="A4FZ85"/>
<dbReference type="STRING" id="402880.MmarC5_1221"/>
<dbReference type="GeneID" id="4929008"/>
<dbReference type="KEGG" id="mmq:MmarC5_1221"/>
<dbReference type="eggNOG" id="arCOG00618">
    <property type="taxonomic scope" value="Archaea"/>
</dbReference>
<dbReference type="HOGENOM" id="CLU_048577_1_1_2"/>
<dbReference type="OrthoDB" id="52866at2157"/>
<dbReference type="UniPathway" id="UPA00031">
    <property type="reaction ID" value="UER00009"/>
</dbReference>
<dbReference type="Proteomes" id="UP000000253">
    <property type="component" value="Chromosome"/>
</dbReference>
<dbReference type="GO" id="GO:0005737">
    <property type="term" value="C:cytoplasm"/>
    <property type="evidence" value="ECO:0007669"/>
    <property type="project" value="UniProtKB-SubCell"/>
</dbReference>
<dbReference type="GO" id="GO:0003949">
    <property type="term" value="F:1-(5-phosphoribosyl)-5-[(5-phosphoribosylamino)methylideneamino]imidazole-4-carboxamide isomerase activity"/>
    <property type="evidence" value="ECO:0007669"/>
    <property type="project" value="UniProtKB-UniRule"/>
</dbReference>
<dbReference type="GO" id="GO:0000105">
    <property type="term" value="P:L-histidine biosynthetic process"/>
    <property type="evidence" value="ECO:0007669"/>
    <property type="project" value="UniProtKB-UniRule"/>
</dbReference>
<dbReference type="GO" id="GO:0000162">
    <property type="term" value="P:L-tryptophan biosynthetic process"/>
    <property type="evidence" value="ECO:0007669"/>
    <property type="project" value="TreeGrafter"/>
</dbReference>
<dbReference type="CDD" id="cd04732">
    <property type="entry name" value="HisA"/>
    <property type="match status" value="1"/>
</dbReference>
<dbReference type="FunFam" id="3.20.20.70:FF:000009">
    <property type="entry name" value="1-(5-phosphoribosyl)-5-[(5-phosphoribosylamino)methylideneamino] imidazole-4-carboxamide isomerase"/>
    <property type="match status" value="1"/>
</dbReference>
<dbReference type="Gene3D" id="3.20.20.70">
    <property type="entry name" value="Aldolase class I"/>
    <property type="match status" value="1"/>
</dbReference>
<dbReference type="HAMAP" id="MF_01014">
    <property type="entry name" value="HisA"/>
    <property type="match status" value="1"/>
</dbReference>
<dbReference type="InterPro" id="IPR013785">
    <property type="entry name" value="Aldolase_TIM"/>
</dbReference>
<dbReference type="InterPro" id="IPR006062">
    <property type="entry name" value="His_biosynth"/>
</dbReference>
<dbReference type="InterPro" id="IPR006063">
    <property type="entry name" value="HisA_bact_arch"/>
</dbReference>
<dbReference type="InterPro" id="IPR044524">
    <property type="entry name" value="Isoase_HisA-like"/>
</dbReference>
<dbReference type="InterPro" id="IPR023016">
    <property type="entry name" value="Isoase_HisA-like_bact"/>
</dbReference>
<dbReference type="InterPro" id="IPR011060">
    <property type="entry name" value="RibuloseP-bd_barrel"/>
</dbReference>
<dbReference type="NCBIfam" id="TIGR00007">
    <property type="entry name" value="1-(5-phosphoribosyl)-5-[(5-phosphoribosylamino)methylideneamino]imidazole-4-carboxamide isomerase"/>
    <property type="match status" value="1"/>
</dbReference>
<dbReference type="NCBIfam" id="NF010112">
    <property type="entry name" value="PRK13585.1"/>
    <property type="match status" value="1"/>
</dbReference>
<dbReference type="PANTHER" id="PTHR43090">
    <property type="entry name" value="1-(5-PHOSPHORIBOSYL)-5-[(5-PHOSPHORIBOSYLAMINO)METHYLIDENEAMINO] IMIDAZOLE-4-CARBOXAMIDE ISOMERASE"/>
    <property type="match status" value="1"/>
</dbReference>
<dbReference type="PANTHER" id="PTHR43090:SF7">
    <property type="entry name" value="1-(5-PHOSPHORIBOSYL)-5-[(5-PHOSPHORIBOSYLAMINO)METHYLIDENEAMINO] IMIDAZOLE-4-CARBOXAMIDE ISOMERASE"/>
    <property type="match status" value="1"/>
</dbReference>
<dbReference type="Pfam" id="PF00977">
    <property type="entry name" value="His_biosynth"/>
    <property type="match status" value="1"/>
</dbReference>
<dbReference type="SUPFAM" id="SSF51366">
    <property type="entry name" value="Ribulose-phoshate binding barrel"/>
    <property type="match status" value="1"/>
</dbReference>
<feature type="chain" id="PRO_1000063218" description="1-(5-phosphoribosyl)-5-[(5-phosphoribosylamino)methylideneamino] imidazole-4-carboxamide isomerase">
    <location>
        <begin position="1"/>
        <end position="238"/>
    </location>
</feature>
<feature type="active site" description="Proton acceptor" evidence="1">
    <location>
        <position position="8"/>
    </location>
</feature>
<feature type="active site" description="Proton donor" evidence="1">
    <location>
        <position position="130"/>
    </location>
</feature>
<gene>
    <name evidence="1" type="primary">hisA</name>
    <name type="ordered locus">MmarC5_1221</name>
</gene>
<comment type="catalytic activity">
    <reaction evidence="1">
        <text>1-(5-phospho-beta-D-ribosyl)-5-[(5-phospho-beta-D-ribosylamino)methylideneamino]imidazole-4-carboxamide = 5-[(5-phospho-1-deoxy-D-ribulos-1-ylimino)methylamino]-1-(5-phospho-beta-D-ribosyl)imidazole-4-carboxamide</text>
        <dbReference type="Rhea" id="RHEA:15469"/>
        <dbReference type="ChEBI" id="CHEBI:58435"/>
        <dbReference type="ChEBI" id="CHEBI:58525"/>
        <dbReference type="EC" id="5.3.1.16"/>
    </reaction>
</comment>
<comment type="pathway">
    <text evidence="1">Amino-acid biosynthesis; L-histidine biosynthesis; L-histidine from 5-phospho-alpha-D-ribose 1-diphosphate: step 4/9.</text>
</comment>
<comment type="subcellular location">
    <subcellularLocation>
        <location evidence="1">Cytoplasm</location>
    </subcellularLocation>
</comment>
<comment type="similarity">
    <text evidence="1">Belongs to the HisA/HisF family.</text>
</comment>
<protein>
    <recommendedName>
        <fullName evidence="1">1-(5-phosphoribosyl)-5-[(5-phosphoribosylamino)methylideneamino] imidazole-4-carboxamide isomerase</fullName>
        <ecNumber evidence="1">5.3.1.16</ecNumber>
    </recommendedName>
    <alternativeName>
        <fullName evidence="1">Phosphoribosylformimino-5-aminoimidazole carboxamide ribotide isomerase</fullName>
    </alternativeName>
</protein>
<evidence type="ECO:0000255" key="1">
    <source>
        <dbReference type="HAMAP-Rule" id="MF_01014"/>
    </source>
</evidence>